<sequence>MSEEQVNIKKKEKWGIAHIYSSFNNTIIHITDITGAETISRWSGGMVVKADRDEPSPYAAMLAARRAAEEALEKGIVGVHIRVRAPGGSKSKTPGPGAQAAIRALARAGLKIGRVEDVTPIPHDGTRPKGGRRGRRV</sequence>
<accession>Q8U0E3</accession>
<organism>
    <name type="scientific">Pyrococcus furiosus (strain ATCC 43587 / DSM 3638 / JCM 8422 / Vc1)</name>
    <dbReference type="NCBI Taxonomy" id="186497"/>
    <lineage>
        <taxon>Archaea</taxon>
        <taxon>Methanobacteriati</taxon>
        <taxon>Methanobacteriota</taxon>
        <taxon>Thermococci</taxon>
        <taxon>Thermococcales</taxon>
        <taxon>Thermococcaceae</taxon>
        <taxon>Pyrococcus</taxon>
    </lineage>
</organism>
<reference key="1">
    <citation type="journal article" date="1999" name="Genetics">
        <title>Divergence of the hyperthermophilic archaea Pyrococcus furiosus and P. horikoshii inferred from complete genomic sequences.</title>
        <authorList>
            <person name="Maeder D.L."/>
            <person name="Weiss R.B."/>
            <person name="Dunn D.M."/>
            <person name="Cherry J.L."/>
            <person name="Gonzalez J.M."/>
            <person name="DiRuggiero J."/>
            <person name="Robb F.T."/>
        </authorList>
    </citation>
    <scope>NUCLEOTIDE SEQUENCE [LARGE SCALE GENOMIC DNA]</scope>
    <source>
        <strain>ATCC 43587 / DSM 3638 / JCM 8422 / Vc1</strain>
    </source>
</reference>
<reference evidence="4" key="2">
    <citation type="journal article" date="2013" name="Nucleic Acids Res.">
        <title>Promiscuous behaviour of archaeal ribosomal proteins: implications for eukaryotic ribosome evolution.</title>
        <authorList>
            <person name="Armache J.P."/>
            <person name="Anger A.M."/>
            <person name="Marquez V."/>
            <person name="Franckenberg S."/>
            <person name="Frohlich T."/>
            <person name="Villa E."/>
            <person name="Berninghausen O."/>
            <person name="Thomm M."/>
            <person name="Arnold G.J."/>
            <person name="Beckmann R."/>
            <person name="Wilson D.N."/>
        </authorList>
    </citation>
    <scope>STRUCTURE BY ELECTRON MICROSCOPY (6.60 ANGSTROMS) IN THE 70S RIBOSOME</scope>
    <scope>SUBUNIT</scope>
</reference>
<name>RS11_PYRFU</name>
<gene>
    <name evidence="1" type="primary">rps11</name>
    <name type="ordered locus">PF1648</name>
</gene>
<keyword id="KW-0002">3D-structure</keyword>
<keyword id="KW-1185">Reference proteome</keyword>
<keyword id="KW-0687">Ribonucleoprotein</keyword>
<keyword id="KW-0689">Ribosomal protein</keyword>
<keyword id="KW-0694">RNA-binding</keyword>
<keyword id="KW-0699">rRNA-binding</keyword>
<evidence type="ECO:0000255" key="1">
    <source>
        <dbReference type="HAMAP-Rule" id="MF_01310"/>
    </source>
</evidence>
<evidence type="ECO:0000256" key="2">
    <source>
        <dbReference type="SAM" id="MobiDB-lite"/>
    </source>
</evidence>
<evidence type="ECO:0000269" key="3">
    <source>
    </source>
</evidence>
<evidence type="ECO:0007744" key="4">
    <source>
        <dbReference type="PDB" id="4V6U"/>
    </source>
</evidence>
<protein>
    <recommendedName>
        <fullName evidence="1">Small ribosomal subunit protein uS11</fullName>
    </recommendedName>
    <alternativeName>
        <fullName>30S ribosomal protein S11</fullName>
    </alternativeName>
</protein>
<comment type="function">
    <text evidence="1">Located on the platform of the 30S subunit.</text>
</comment>
<comment type="subunit">
    <text evidence="1 3">Part of the 30S ribosomal subunit.</text>
</comment>
<comment type="similarity">
    <text evidence="1">Belongs to the universal ribosomal protein uS11 family.</text>
</comment>
<feature type="chain" id="PRO_0000123279" description="Small ribosomal subunit protein uS11">
    <location>
        <begin position="1"/>
        <end position="137"/>
    </location>
</feature>
<feature type="region of interest" description="Disordered" evidence="2">
    <location>
        <begin position="116"/>
        <end position="137"/>
    </location>
</feature>
<proteinExistence type="evidence at protein level"/>
<dbReference type="EMBL" id="AE009950">
    <property type="protein sequence ID" value="AAL81772.1"/>
    <property type="molecule type" value="Genomic_DNA"/>
</dbReference>
<dbReference type="RefSeq" id="WP_011012795.1">
    <property type="nucleotide sequence ID" value="NZ_CP023154.1"/>
</dbReference>
<dbReference type="PDB" id="4V6U">
    <property type="method" value="EM"/>
    <property type="resolution" value="6.60 A"/>
    <property type="chains" value="AM=1-137"/>
</dbReference>
<dbReference type="PDBsum" id="4V6U"/>
<dbReference type="EMDB" id="EMD-50611"/>
<dbReference type="EMDB" id="EMD-50612"/>
<dbReference type="EMDB" id="EMD-50613"/>
<dbReference type="SMR" id="Q8U0E3"/>
<dbReference type="STRING" id="186497.PF1648"/>
<dbReference type="PaxDb" id="186497-PF1648"/>
<dbReference type="KEGG" id="pfu:PF1648"/>
<dbReference type="PATRIC" id="fig|186497.12.peg.1714"/>
<dbReference type="eggNOG" id="arCOG04240">
    <property type="taxonomic scope" value="Archaea"/>
</dbReference>
<dbReference type="HOGENOM" id="CLU_072439_6_1_2"/>
<dbReference type="OrthoDB" id="12054at2157"/>
<dbReference type="PhylomeDB" id="Q8U0E3"/>
<dbReference type="Proteomes" id="UP000001013">
    <property type="component" value="Chromosome"/>
</dbReference>
<dbReference type="GO" id="GO:1990904">
    <property type="term" value="C:ribonucleoprotein complex"/>
    <property type="evidence" value="ECO:0007669"/>
    <property type="project" value="UniProtKB-KW"/>
</dbReference>
<dbReference type="GO" id="GO:0005840">
    <property type="term" value="C:ribosome"/>
    <property type="evidence" value="ECO:0007669"/>
    <property type="project" value="UniProtKB-KW"/>
</dbReference>
<dbReference type="GO" id="GO:0019843">
    <property type="term" value="F:rRNA binding"/>
    <property type="evidence" value="ECO:0007669"/>
    <property type="project" value="UniProtKB-UniRule"/>
</dbReference>
<dbReference type="GO" id="GO:0003735">
    <property type="term" value="F:structural constituent of ribosome"/>
    <property type="evidence" value="ECO:0007669"/>
    <property type="project" value="InterPro"/>
</dbReference>
<dbReference type="GO" id="GO:0006412">
    <property type="term" value="P:translation"/>
    <property type="evidence" value="ECO:0007669"/>
    <property type="project" value="UniProtKB-UniRule"/>
</dbReference>
<dbReference type="FunFam" id="3.30.420.80:FF:000007">
    <property type="entry name" value="30S ribosomal protein S11"/>
    <property type="match status" value="1"/>
</dbReference>
<dbReference type="Gene3D" id="3.30.420.80">
    <property type="entry name" value="Ribosomal protein S11"/>
    <property type="match status" value="1"/>
</dbReference>
<dbReference type="HAMAP" id="MF_01310">
    <property type="entry name" value="Ribosomal_uS11"/>
    <property type="match status" value="1"/>
</dbReference>
<dbReference type="InterPro" id="IPR001971">
    <property type="entry name" value="Ribosomal_uS11"/>
</dbReference>
<dbReference type="InterPro" id="IPR019961">
    <property type="entry name" value="Ribosomal_uS11_archaeal"/>
</dbReference>
<dbReference type="InterPro" id="IPR018102">
    <property type="entry name" value="Ribosomal_uS11_CS"/>
</dbReference>
<dbReference type="InterPro" id="IPR036967">
    <property type="entry name" value="Ribosomal_uS11_sf"/>
</dbReference>
<dbReference type="NCBIfam" id="TIGR03628">
    <property type="entry name" value="arch_S11P"/>
    <property type="match status" value="1"/>
</dbReference>
<dbReference type="NCBIfam" id="NF007176">
    <property type="entry name" value="PRK09607.1"/>
    <property type="match status" value="1"/>
</dbReference>
<dbReference type="PANTHER" id="PTHR11759">
    <property type="entry name" value="40S RIBOSOMAL PROTEIN S14/30S RIBOSOMAL PROTEIN S11"/>
    <property type="match status" value="1"/>
</dbReference>
<dbReference type="Pfam" id="PF00411">
    <property type="entry name" value="Ribosomal_S11"/>
    <property type="match status" value="1"/>
</dbReference>
<dbReference type="PIRSF" id="PIRSF002131">
    <property type="entry name" value="Ribosomal_S11"/>
    <property type="match status" value="1"/>
</dbReference>
<dbReference type="SUPFAM" id="SSF53137">
    <property type="entry name" value="Translational machinery components"/>
    <property type="match status" value="1"/>
</dbReference>
<dbReference type="PROSITE" id="PS00054">
    <property type="entry name" value="RIBOSOMAL_S11"/>
    <property type="match status" value="1"/>
</dbReference>